<organism>
    <name type="scientific">Aeromonas hydrophila subsp. hydrophila (strain ATCC 7966 / DSM 30187 / BCRC 13018 / CCUG 14551 / JCM 1027 / KCTC 2358 / NCIMB 9240 / NCTC 8049)</name>
    <dbReference type="NCBI Taxonomy" id="380703"/>
    <lineage>
        <taxon>Bacteria</taxon>
        <taxon>Pseudomonadati</taxon>
        <taxon>Pseudomonadota</taxon>
        <taxon>Gammaproteobacteria</taxon>
        <taxon>Aeromonadales</taxon>
        <taxon>Aeromonadaceae</taxon>
        <taxon>Aeromonas</taxon>
    </lineage>
</organism>
<reference key="1">
    <citation type="journal article" date="2006" name="J. Bacteriol.">
        <title>Genome sequence of Aeromonas hydrophila ATCC 7966T: jack of all trades.</title>
        <authorList>
            <person name="Seshadri R."/>
            <person name="Joseph S.W."/>
            <person name="Chopra A.K."/>
            <person name="Sha J."/>
            <person name="Shaw J."/>
            <person name="Graf J."/>
            <person name="Haft D.H."/>
            <person name="Wu M."/>
            <person name="Ren Q."/>
            <person name="Rosovitz M.J."/>
            <person name="Madupu R."/>
            <person name="Tallon L."/>
            <person name="Kim M."/>
            <person name="Jin S."/>
            <person name="Vuong H."/>
            <person name="Stine O.C."/>
            <person name="Ali A."/>
            <person name="Horneman A.J."/>
            <person name="Heidelberg J.F."/>
        </authorList>
    </citation>
    <scope>NUCLEOTIDE SEQUENCE [LARGE SCALE GENOMIC DNA]</scope>
    <source>
        <strain>ATCC 7966 / DSM 30187 / BCRC 13018 / CCUG 14551 / JCM 1027 / KCTC 2358 / NCIMB 9240 / NCTC 8049</strain>
    </source>
</reference>
<dbReference type="EMBL" id="CP000462">
    <property type="protein sequence ID" value="ABK36645.1"/>
    <property type="molecule type" value="Genomic_DNA"/>
</dbReference>
<dbReference type="RefSeq" id="WP_005307966.1">
    <property type="nucleotide sequence ID" value="NC_008570.1"/>
</dbReference>
<dbReference type="RefSeq" id="YP_854852.1">
    <property type="nucleotide sequence ID" value="NC_008570.1"/>
</dbReference>
<dbReference type="SMR" id="A0KF30"/>
<dbReference type="STRING" id="380703.AHA_0318"/>
<dbReference type="EnsemblBacteria" id="ABK36645">
    <property type="protein sequence ID" value="ABK36645"/>
    <property type="gene ID" value="AHA_0318"/>
</dbReference>
<dbReference type="GeneID" id="97858403"/>
<dbReference type="KEGG" id="aha:AHA_0318"/>
<dbReference type="PATRIC" id="fig|380703.7.peg.307"/>
<dbReference type="eggNOG" id="COG0186">
    <property type="taxonomic scope" value="Bacteria"/>
</dbReference>
<dbReference type="HOGENOM" id="CLU_073626_1_1_6"/>
<dbReference type="OrthoDB" id="9811714at2"/>
<dbReference type="PRO" id="PR:A0KF30"/>
<dbReference type="Proteomes" id="UP000000756">
    <property type="component" value="Chromosome"/>
</dbReference>
<dbReference type="GO" id="GO:0022627">
    <property type="term" value="C:cytosolic small ribosomal subunit"/>
    <property type="evidence" value="ECO:0007669"/>
    <property type="project" value="TreeGrafter"/>
</dbReference>
<dbReference type="GO" id="GO:0019843">
    <property type="term" value="F:rRNA binding"/>
    <property type="evidence" value="ECO:0007669"/>
    <property type="project" value="UniProtKB-UniRule"/>
</dbReference>
<dbReference type="GO" id="GO:0003735">
    <property type="term" value="F:structural constituent of ribosome"/>
    <property type="evidence" value="ECO:0007669"/>
    <property type="project" value="InterPro"/>
</dbReference>
<dbReference type="GO" id="GO:0006412">
    <property type="term" value="P:translation"/>
    <property type="evidence" value="ECO:0007669"/>
    <property type="project" value="UniProtKB-UniRule"/>
</dbReference>
<dbReference type="CDD" id="cd00364">
    <property type="entry name" value="Ribosomal_uS17"/>
    <property type="match status" value="1"/>
</dbReference>
<dbReference type="FunFam" id="2.40.50.140:FF:000014">
    <property type="entry name" value="30S ribosomal protein S17"/>
    <property type="match status" value="1"/>
</dbReference>
<dbReference type="Gene3D" id="2.40.50.140">
    <property type="entry name" value="Nucleic acid-binding proteins"/>
    <property type="match status" value="1"/>
</dbReference>
<dbReference type="HAMAP" id="MF_01345_B">
    <property type="entry name" value="Ribosomal_uS17_B"/>
    <property type="match status" value="1"/>
</dbReference>
<dbReference type="InterPro" id="IPR012340">
    <property type="entry name" value="NA-bd_OB-fold"/>
</dbReference>
<dbReference type="InterPro" id="IPR000266">
    <property type="entry name" value="Ribosomal_uS17"/>
</dbReference>
<dbReference type="InterPro" id="IPR019984">
    <property type="entry name" value="Ribosomal_uS17_bact/chlr"/>
</dbReference>
<dbReference type="InterPro" id="IPR019979">
    <property type="entry name" value="Ribosomal_uS17_CS"/>
</dbReference>
<dbReference type="NCBIfam" id="NF004123">
    <property type="entry name" value="PRK05610.1"/>
    <property type="match status" value="1"/>
</dbReference>
<dbReference type="NCBIfam" id="TIGR03635">
    <property type="entry name" value="uS17_bact"/>
    <property type="match status" value="1"/>
</dbReference>
<dbReference type="PANTHER" id="PTHR10744">
    <property type="entry name" value="40S RIBOSOMAL PROTEIN S11 FAMILY MEMBER"/>
    <property type="match status" value="1"/>
</dbReference>
<dbReference type="PANTHER" id="PTHR10744:SF1">
    <property type="entry name" value="SMALL RIBOSOMAL SUBUNIT PROTEIN US17M"/>
    <property type="match status" value="1"/>
</dbReference>
<dbReference type="Pfam" id="PF00366">
    <property type="entry name" value="Ribosomal_S17"/>
    <property type="match status" value="1"/>
</dbReference>
<dbReference type="PRINTS" id="PR00973">
    <property type="entry name" value="RIBOSOMALS17"/>
</dbReference>
<dbReference type="SUPFAM" id="SSF50249">
    <property type="entry name" value="Nucleic acid-binding proteins"/>
    <property type="match status" value="1"/>
</dbReference>
<dbReference type="PROSITE" id="PS00056">
    <property type="entry name" value="RIBOSOMAL_S17"/>
    <property type="match status" value="1"/>
</dbReference>
<name>RS17_AERHH</name>
<proteinExistence type="inferred from homology"/>
<evidence type="ECO:0000255" key="1">
    <source>
        <dbReference type="HAMAP-Rule" id="MF_01345"/>
    </source>
</evidence>
<evidence type="ECO:0000305" key="2"/>
<protein>
    <recommendedName>
        <fullName evidence="1">Small ribosomal subunit protein uS17</fullName>
    </recommendedName>
    <alternativeName>
        <fullName evidence="2">30S ribosomal protein S17</fullName>
    </alternativeName>
</protein>
<comment type="function">
    <text evidence="1">One of the primary rRNA binding proteins, it binds specifically to the 5'-end of 16S ribosomal RNA.</text>
</comment>
<comment type="subunit">
    <text evidence="1">Part of the 30S ribosomal subunit.</text>
</comment>
<comment type="similarity">
    <text evidence="1">Belongs to the universal ribosomal protein uS17 family.</text>
</comment>
<gene>
    <name evidence="1" type="primary">rpsQ</name>
    <name type="ordered locus">AHA_0318</name>
</gene>
<sequence length="82" mass="9399">MTDKIRTLQGRVISDKMDKSITVAIERKVKHPIYGKIIKRTTKLHVHDENNECKAGDLVEIRECRPLSKTKSWTLVAVVEKA</sequence>
<feature type="chain" id="PRO_1000054910" description="Small ribosomal subunit protein uS17">
    <location>
        <begin position="1"/>
        <end position="82"/>
    </location>
</feature>
<accession>A0KF30</accession>
<keyword id="KW-1185">Reference proteome</keyword>
<keyword id="KW-0687">Ribonucleoprotein</keyword>
<keyword id="KW-0689">Ribosomal protein</keyword>
<keyword id="KW-0694">RNA-binding</keyword>
<keyword id="KW-0699">rRNA-binding</keyword>